<feature type="chain" id="PRO_1000086742" description="Large ribosomal subunit protein uL16">
    <location>
        <begin position="1"/>
        <end position="137"/>
    </location>
</feature>
<comment type="function">
    <text evidence="1">Binds 23S rRNA and is also seen to make contacts with the A and possibly P site tRNAs.</text>
</comment>
<comment type="subunit">
    <text evidence="1">Part of the 50S ribosomal subunit.</text>
</comment>
<comment type="similarity">
    <text evidence="1">Belongs to the universal ribosomal protein uL16 family.</text>
</comment>
<reference key="1">
    <citation type="journal article" date="2007" name="Nat. Genet.">
        <title>Genomic analysis of Bartonella identifies type IV secretion systems as host adaptability factors.</title>
        <authorList>
            <person name="Saenz H.L."/>
            <person name="Engel P."/>
            <person name="Stoeckli M.C."/>
            <person name="Lanz C."/>
            <person name="Raddatz G."/>
            <person name="Vayssier-Taussat M."/>
            <person name="Birtles R."/>
            <person name="Schuster S.C."/>
            <person name="Dehio C."/>
        </authorList>
    </citation>
    <scope>NUCLEOTIDE SEQUENCE [LARGE SCALE GENOMIC DNA]</scope>
    <source>
        <strain>CIP 105476 / IBS 506</strain>
    </source>
</reference>
<organism>
    <name type="scientific">Bartonella tribocorum (strain CIP 105476 / IBS 506)</name>
    <dbReference type="NCBI Taxonomy" id="382640"/>
    <lineage>
        <taxon>Bacteria</taxon>
        <taxon>Pseudomonadati</taxon>
        <taxon>Pseudomonadota</taxon>
        <taxon>Alphaproteobacteria</taxon>
        <taxon>Hyphomicrobiales</taxon>
        <taxon>Bartonellaceae</taxon>
        <taxon>Bartonella</taxon>
    </lineage>
</organism>
<proteinExistence type="inferred from homology"/>
<sequence length="137" mass="15464">MLQPKRTKFRKQFKGRIHGVAKGGTDLNFGAYGLKAVEPERVTARQIEAARRAITRYMKRSGRVWIRIFPDLPVTSKPTEVRMGKGKGSVDYWAARVAPGRVMFELDGVPEDVAREALRLGAAKLPIKTRFIQRIAE</sequence>
<accession>A9IW18</accession>
<protein>
    <recommendedName>
        <fullName evidence="1">Large ribosomal subunit protein uL16</fullName>
    </recommendedName>
    <alternativeName>
        <fullName evidence="2">50S ribosomal protein L16</fullName>
    </alternativeName>
</protein>
<dbReference type="EMBL" id="AM260525">
    <property type="protein sequence ID" value="CAK01857.1"/>
    <property type="molecule type" value="Genomic_DNA"/>
</dbReference>
<dbReference type="RefSeq" id="WP_005773276.1">
    <property type="nucleotide sequence ID" value="NC_010161.1"/>
</dbReference>
<dbReference type="SMR" id="A9IW18"/>
<dbReference type="GeneID" id="71061552"/>
<dbReference type="KEGG" id="btr:BT_1511"/>
<dbReference type="eggNOG" id="COG0197">
    <property type="taxonomic scope" value="Bacteria"/>
</dbReference>
<dbReference type="HOGENOM" id="CLU_078858_2_1_5"/>
<dbReference type="Proteomes" id="UP000001592">
    <property type="component" value="Chromosome"/>
</dbReference>
<dbReference type="GO" id="GO:0022625">
    <property type="term" value="C:cytosolic large ribosomal subunit"/>
    <property type="evidence" value="ECO:0007669"/>
    <property type="project" value="TreeGrafter"/>
</dbReference>
<dbReference type="GO" id="GO:0019843">
    <property type="term" value="F:rRNA binding"/>
    <property type="evidence" value="ECO:0007669"/>
    <property type="project" value="UniProtKB-UniRule"/>
</dbReference>
<dbReference type="GO" id="GO:0003735">
    <property type="term" value="F:structural constituent of ribosome"/>
    <property type="evidence" value="ECO:0007669"/>
    <property type="project" value="InterPro"/>
</dbReference>
<dbReference type="GO" id="GO:0000049">
    <property type="term" value="F:tRNA binding"/>
    <property type="evidence" value="ECO:0007669"/>
    <property type="project" value="UniProtKB-KW"/>
</dbReference>
<dbReference type="GO" id="GO:0006412">
    <property type="term" value="P:translation"/>
    <property type="evidence" value="ECO:0007669"/>
    <property type="project" value="UniProtKB-UniRule"/>
</dbReference>
<dbReference type="CDD" id="cd01433">
    <property type="entry name" value="Ribosomal_L16_L10e"/>
    <property type="match status" value="1"/>
</dbReference>
<dbReference type="FunFam" id="3.90.1170.10:FF:000001">
    <property type="entry name" value="50S ribosomal protein L16"/>
    <property type="match status" value="1"/>
</dbReference>
<dbReference type="Gene3D" id="3.90.1170.10">
    <property type="entry name" value="Ribosomal protein L10e/L16"/>
    <property type="match status" value="1"/>
</dbReference>
<dbReference type="HAMAP" id="MF_01342">
    <property type="entry name" value="Ribosomal_uL16"/>
    <property type="match status" value="1"/>
</dbReference>
<dbReference type="InterPro" id="IPR047873">
    <property type="entry name" value="Ribosomal_uL16"/>
</dbReference>
<dbReference type="InterPro" id="IPR000114">
    <property type="entry name" value="Ribosomal_uL16_bact-type"/>
</dbReference>
<dbReference type="InterPro" id="IPR020798">
    <property type="entry name" value="Ribosomal_uL16_CS"/>
</dbReference>
<dbReference type="InterPro" id="IPR016180">
    <property type="entry name" value="Ribosomal_uL16_dom"/>
</dbReference>
<dbReference type="InterPro" id="IPR036920">
    <property type="entry name" value="Ribosomal_uL16_sf"/>
</dbReference>
<dbReference type="NCBIfam" id="TIGR01164">
    <property type="entry name" value="rplP_bact"/>
    <property type="match status" value="1"/>
</dbReference>
<dbReference type="PANTHER" id="PTHR12220">
    <property type="entry name" value="50S/60S RIBOSOMAL PROTEIN L16"/>
    <property type="match status" value="1"/>
</dbReference>
<dbReference type="PANTHER" id="PTHR12220:SF13">
    <property type="entry name" value="LARGE RIBOSOMAL SUBUNIT PROTEIN UL16M"/>
    <property type="match status" value="1"/>
</dbReference>
<dbReference type="Pfam" id="PF00252">
    <property type="entry name" value="Ribosomal_L16"/>
    <property type="match status" value="1"/>
</dbReference>
<dbReference type="PRINTS" id="PR00060">
    <property type="entry name" value="RIBOSOMALL16"/>
</dbReference>
<dbReference type="SUPFAM" id="SSF54686">
    <property type="entry name" value="Ribosomal protein L16p/L10e"/>
    <property type="match status" value="1"/>
</dbReference>
<dbReference type="PROSITE" id="PS00586">
    <property type="entry name" value="RIBOSOMAL_L16_1"/>
    <property type="match status" value="1"/>
</dbReference>
<dbReference type="PROSITE" id="PS00701">
    <property type="entry name" value="RIBOSOMAL_L16_2"/>
    <property type="match status" value="1"/>
</dbReference>
<name>RL16_BART1</name>
<evidence type="ECO:0000255" key="1">
    <source>
        <dbReference type="HAMAP-Rule" id="MF_01342"/>
    </source>
</evidence>
<evidence type="ECO:0000305" key="2"/>
<keyword id="KW-0687">Ribonucleoprotein</keyword>
<keyword id="KW-0689">Ribosomal protein</keyword>
<keyword id="KW-0694">RNA-binding</keyword>
<keyword id="KW-0699">rRNA-binding</keyword>
<keyword id="KW-0820">tRNA-binding</keyword>
<gene>
    <name evidence="1" type="primary">rplP</name>
    <name type="ordered locus">BT_1511</name>
</gene>